<reference key="1">
    <citation type="journal article" date="2008" name="J. Bacteriol.">
        <title>The complete genome sequence of Thermococcus onnurineus NA1 reveals a mixed heterotrophic and carboxydotrophic metabolism.</title>
        <authorList>
            <person name="Lee H.S."/>
            <person name="Kang S.G."/>
            <person name="Bae S.S."/>
            <person name="Lim J.K."/>
            <person name="Cho Y."/>
            <person name="Kim Y.J."/>
            <person name="Jeon J.H."/>
            <person name="Cha S.-S."/>
            <person name="Kwon K.K."/>
            <person name="Kim H.-T."/>
            <person name="Park C.-J."/>
            <person name="Lee H.-W."/>
            <person name="Kim S.I."/>
            <person name="Chun J."/>
            <person name="Colwell R.R."/>
            <person name="Kim S.-J."/>
            <person name="Lee J.-H."/>
        </authorList>
    </citation>
    <scope>NUCLEOTIDE SEQUENCE [LARGE SCALE GENOMIC DNA]</scope>
    <source>
        <strain>NA1</strain>
    </source>
</reference>
<keyword id="KW-0687">Ribonucleoprotein</keyword>
<keyword id="KW-0689">Ribosomal protein</keyword>
<keyword id="KW-0694">RNA-binding</keyword>
<keyword id="KW-0699">rRNA-binding</keyword>
<sequence length="86" mass="9859">MDPYKVIIRPVVTEKAVAMIENENKLTFIVDRRATKQDIKRAVEAMFDVKVEKVNTLITMRGEKKAYVKLKPEYSASEIAARIGLF</sequence>
<accession>B6YSL5</accession>
<feature type="chain" id="PRO_1000144614" description="Large ribosomal subunit protein uL23">
    <location>
        <begin position="1"/>
        <end position="86"/>
    </location>
</feature>
<gene>
    <name evidence="1" type="primary">rpl23</name>
    <name type="ordered locus">TON_0068</name>
</gene>
<comment type="function">
    <text evidence="1">Binds to 23S rRNA. One of the proteins that surrounds the polypeptide exit tunnel on the outside of the ribosome.</text>
</comment>
<comment type="subunit">
    <text evidence="1">Part of the 50S ribosomal subunit. Contacts protein L29.</text>
</comment>
<comment type="similarity">
    <text evidence="1">Belongs to the universal ribosomal protein uL23 family.</text>
</comment>
<dbReference type="EMBL" id="CP000855">
    <property type="protein sequence ID" value="ACJ15552.1"/>
    <property type="molecule type" value="Genomic_DNA"/>
</dbReference>
<dbReference type="RefSeq" id="WP_012571025.1">
    <property type="nucleotide sequence ID" value="NC_011529.1"/>
</dbReference>
<dbReference type="SMR" id="B6YSL5"/>
<dbReference type="STRING" id="523850.TON_0068"/>
<dbReference type="GeneID" id="7017714"/>
<dbReference type="KEGG" id="ton:TON_0068"/>
<dbReference type="PATRIC" id="fig|523850.10.peg.68"/>
<dbReference type="eggNOG" id="arCOG04072">
    <property type="taxonomic scope" value="Archaea"/>
</dbReference>
<dbReference type="HOGENOM" id="CLU_037562_4_2_2"/>
<dbReference type="OrthoDB" id="7751at2157"/>
<dbReference type="Proteomes" id="UP000002727">
    <property type="component" value="Chromosome"/>
</dbReference>
<dbReference type="GO" id="GO:1990904">
    <property type="term" value="C:ribonucleoprotein complex"/>
    <property type="evidence" value="ECO:0007669"/>
    <property type="project" value="UniProtKB-KW"/>
</dbReference>
<dbReference type="GO" id="GO:0005840">
    <property type="term" value="C:ribosome"/>
    <property type="evidence" value="ECO:0007669"/>
    <property type="project" value="UniProtKB-KW"/>
</dbReference>
<dbReference type="GO" id="GO:0019843">
    <property type="term" value="F:rRNA binding"/>
    <property type="evidence" value="ECO:0007669"/>
    <property type="project" value="UniProtKB-UniRule"/>
</dbReference>
<dbReference type="GO" id="GO:0003735">
    <property type="term" value="F:structural constituent of ribosome"/>
    <property type="evidence" value="ECO:0007669"/>
    <property type="project" value="InterPro"/>
</dbReference>
<dbReference type="GO" id="GO:0006412">
    <property type="term" value="P:translation"/>
    <property type="evidence" value="ECO:0007669"/>
    <property type="project" value="UniProtKB-UniRule"/>
</dbReference>
<dbReference type="FunFam" id="3.30.70.330:FF:001084">
    <property type="entry name" value="50S ribosomal protein L23"/>
    <property type="match status" value="1"/>
</dbReference>
<dbReference type="Gene3D" id="3.30.70.330">
    <property type="match status" value="1"/>
</dbReference>
<dbReference type="HAMAP" id="MF_01369_A">
    <property type="entry name" value="Ribosomal_uL23_A"/>
    <property type="match status" value="1"/>
</dbReference>
<dbReference type="HAMAP" id="MF_01369_B">
    <property type="entry name" value="Ribosomal_uL23_B"/>
    <property type="match status" value="1"/>
</dbReference>
<dbReference type="InterPro" id="IPR012677">
    <property type="entry name" value="Nucleotide-bd_a/b_plait_sf"/>
</dbReference>
<dbReference type="InterPro" id="IPR019985">
    <property type="entry name" value="Ribosomal_uL23"/>
</dbReference>
<dbReference type="InterPro" id="IPR013025">
    <property type="entry name" value="Ribosomal_uL23-like"/>
</dbReference>
<dbReference type="InterPro" id="IPR012678">
    <property type="entry name" value="Ribosomal_uL23/eL15/eS24_sf"/>
</dbReference>
<dbReference type="InterPro" id="IPR001014">
    <property type="entry name" value="Ribosomal_uL23_CS"/>
</dbReference>
<dbReference type="NCBIfam" id="NF011118">
    <property type="entry name" value="PRK14548.1"/>
    <property type="match status" value="1"/>
</dbReference>
<dbReference type="NCBIfam" id="TIGR03636">
    <property type="entry name" value="uL23_arch"/>
    <property type="match status" value="1"/>
</dbReference>
<dbReference type="PANTHER" id="PTHR11620">
    <property type="entry name" value="60S RIBOSOMAL PROTEIN L23A"/>
    <property type="match status" value="1"/>
</dbReference>
<dbReference type="Pfam" id="PF00276">
    <property type="entry name" value="Ribosomal_L23"/>
    <property type="match status" value="1"/>
</dbReference>
<dbReference type="SUPFAM" id="SSF54189">
    <property type="entry name" value="Ribosomal proteins S24e, L23 and L15e"/>
    <property type="match status" value="1"/>
</dbReference>
<dbReference type="PROSITE" id="PS00050">
    <property type="entry name" value="RIBOSOMAL_L23"/>
    <property type="match status" value="1"/>
</dbReference>
<protein>
    <recommendedName>
        <fullName evidence="1">Large ribosomal subunit protein uL23</fullName>
    </recommendedName>
    <alternativeName>
        <fullName evidence="2">50S ribosomal protein L23</fullName>
    </alternativeName>
</protein>
<evidence type="ECO:0000255" key="1">
    <source>
        <dbReference type="HAMAP-Rule" id="MF_01369"/>
    </source>
</evidence>
<evidence type="ECO:0000305" key="2"/>
<organism>
    <name type="scientific">Thermococcus onnurineus (strain NA1)</name>
    <dbReference type="NCBI Taxonomy" id="523850"/>
    <lineage>
        <taxon>Archaea</taxon>
        <taxon>Methanobacteriati</taxon>
        <taxon>Methanobacteriota</taxon>
        <taxon>Thermococci</taxon>
        <taxon>Thermococcales</taxon>
        <taxon>Thermococcaceae</taxon>
        <taxon>Thermococcus</taxon>
    </lineage>
</organism>
<proteinExistence type="inferred from homology"/>
<name>RL23_THEON</name>